<protein>
    <recommendedName>
        <fullName evidence="5">Aspercryptin biosynthesis cluster protein K</fullName>
    </recommendedName>
</protein>
<feature type="chain" id="PRO_0000444139" description="Aspercryptin biosynthesis cluster protein K">
    <location>
        <begin position="1"/>
        <end position="125"/>
    </location>
</feature>
<feature type="region of interest" description="Disordered" evidence="1">
    <location>
        <begin position="104"/>
        <end position="125"/>
    </location>
</feature>
<feature type="compositionally biased region" description="Basic and acidic residues" evidence="1">
    <location>
        <begin position="113"/>
        <end position="125"/>
    </location>
</feature>
<proteinExistence type="evidence at transcript level"/>
<keyword id="KW-1185">Reference proteome</keyword>
<sequence>MINQTAMLLTRSLRPRSAFVGAGLGYPRRFLTTVESPLHEFFVVIFNKRNAKESDLAPAPQTIKFKEQDVILTFAGDMMASAAPATDSAPERTLGACFRVPGTQRAESVAGDSRPREHRQGAVGY</sequence>
<dbReference type="EMBL" id="BN001302">
    <property type="protein sequence ID" value="CBF73435.1"/>
    <property type="molecule type" value="Genomic_DNA"/>
</dbReference>
<dbReference type="EMBL" id="AACD01000135">
    <property type="protein sequence ID" value="EAA59529.1"/>
    <property type="molecule type" value="Genomic_DNA"/>
</dbReference>
<dbReference type="RefSeq" id="XP_681144.1">
    <property type="nucleotide sequence ID" value="XM_676052.1"/>
</dbReference>
<dbReference type="STRING" id="227321.Q5AV05"/>
<dbReference type="EnsemblFungi" id="CBF73435">
    <property type="protein sequence ID" value="CBF73435"/>
    <property type="gene ID" value="ANIA_07875"/>
</dbReference>
<dbReference type="GeneID" id="2869267"/>
<dbReference type="KEGG" id="ani:ANIA_07875"/>
<dbReference type="VEuPathDB" id="FungiDB:AN7875"/>
<dbReference type="HOGENOM" id="CLU_1992609_0_0_1"/>
<dbReference type="InParanoid" id="Q5AV05"/>
<dbReference type="OrthoDB" id="4369758at2759"/>
<dbReference type="Proteomes" id="UP000000560">
    <property type="component" value="Chromosome II"/>
</dbReference>
<accession>Q5AV05</accession>
<accession>A0A1U8QH45</accession>
<accession>C8V3Y0</accession>
<reference key="1">
    <citation type="journal article" date="2005" name="Nature">
        <title>Sequencing of Aspergillus nidulans and comparative analysis with A. fumigatus and A. oryzae.</title>
        <authorList>
            <person name="Galagan J.E."/>
            <person name="Calvo S.E."/>
            <person name="Cuomo C."/>
            <person name="Ma L.-J."/>
            <person name="Wortman J.R."/>
            <person name="Batzoglou S."/>
            <person name="Lee S.-I."/>
            <person name="Bastuerkmen M."/>
            <person name="Spevak C.C."/>
            <person name="Clutterbuck J."/>
            <person name="Kapitonov V."/>
            <person name="Jurka J."/>
            <person name="Scazzocchio C."/>
            <person name="Farman M.L."/>
            <person name="Butler J."/>
            <person name="Purcell S."/>
            <person name="Harris S."/>
            <person name="Braus G.H."/>
            <person name="Draht O."/>
            <person name="Busch S."/>
            <person name="D'Enfert C."/>
            <person name="Bouchier C."/>
            <person name="Goldman G.H."/>
            <person name="Bell-Pedersen D."/>
            <person name="Griffiths-Jones S."/>
            <person name="Doonan J.H."/>
            <person name="Yu J."/>
            <person name="Vienken K."/>
            <person name="Pain A."/>
            <person name="Freitag M."/>
            <person name="Selker E.U."/>
            <person name="Archer D.B."/>
            <person name="Penalva M.A."/>
            <person name="Oakley B.R."/>
            <person name="Momany M."/>
            <person name="Tanaka T."/>
            <person name="Kumagai T."/>
            <person name="Asai K."/>
            <person name="Machida M."/>
            <person name="Nierman W.C."/>
            <person name="Denning D.W."/>
            <person name="Caddick M.X."/>
            <person name="Hynes M."/>
            <person name="Paoletti M."/>
            <person name="Fischer R."/>
            <person name="Miller B.L."/>
            <person name="Dyer P.S."/>
            <person name="Sachs M.S."/>
            <person name="Osmani S.A."/>
            <person name="Birren B.W."/>
        </authorList>
    </citation>
    <scope>NUCLEOTIDE SEQUENCE [LARGE SCALE GENOMIC DNA]</scope>
    <source>
        <strain>FGSC A4 / ATCC 38163 / CBS 112.46 / NRRL 194 / M139</strain>
    </source>
</reference>
<reference key="2">
    <citation type="journal article" date="2009" name="Fungal Genet. Biol.">
        <title>The 2008 update of the Aspergillus nidulans genome annotation: a community effort.</title>
        <authorList>
            <person name="Wortman J.R."/>
            <person name="Gilsenan J.M."/>
            <person name="Joardar V."/>
            <person name="Deegan J."/>
            <person name="Clutterbuck J."/>
            <person name="Andersen M.R."/>
            <person name="Archer D."/>
            <person name="Bencina M."/>
            <person name="Braus G."/>
            <person name="Coutinho P."/>
            <person name="von Dohren H."/>
            <person name="Doonan J."/>
            <person name="Driessen A.J."/>
            <person name="Durek P."/>
            <person name="Espeso E."/>
            <person name="Fekete E."/>
            <person name="Flipphi M."/>
            <person name="Estrada C.G."/>
            <person name="Geysens S."/>
            <person name="Goldman G."/>
            <person name="de Groot P.W."/>
            <person name="Hansen K."/>
            <person name="Harris S.D."/>
            <person name="Heinekamp T."/>
            <person name="Helmstaedt K."/>
            <person name="Henrissat B."/>
            <person name="Hofmann G."/>
            <person name="Homan T."/>
            <person name="Horio T."/>
            <person name="Horiuchi H."/>
            <person name="James S."/>
            <person name="Jones M."/>
            <person name="Karaffa L."/>
            <person name="Karanyi Z."/>
            <person name="Kato M."/>
            <person name="Keller N."/>
            <person name="Kelly D.E."/>
            <person name="Kiel J.A."/>
            <person name="Kim J.M."/>
            <person name="van der Klei I.J."/>
            <person name="Klis F.M."/>
            <person name="Kovalchuk A."/>
            <person name="Krasevec N."/>
            <person name="Kubicek C.P."/>
            <person name="Liu B."/>
            <person name="Maccabe A."/>
            <person name="Meyer V."/>
            <person name="Mirabito P."/>
            <person name="Miskei M."/>
            <person name="Mos M."/>
            <person name="Mullins J."/>
            <person name="Nelson D.R."/>
            <person name="Nielsen J."/>
            <person name="Oakley B.R."/>
            <person name="Osmani S.A."/>
            <person name="Pakula T."/>
            <person name="Paszewski A."/>
            <person name="Paulsen I."/>
            <person name="Pilsyk S."/>
            <person name="Pocsi I."/>
            <person name="Punt P.J."/>
            <person name="Ram A.F."/>
            <person name="Ren Q."/>
            <person name="Robellet X."/>
            <person name="Robson G."/>
            <person name="Seiboth B."/>
            <person name="van Solingen P."/>
            <person name="Specht T."/>
            <person name="Sun J."/>
            <person name="Taheri-Talesh N."/>
            <person name="Takeshita N."/>
            <person name="Ussery D."/>
            <person name="vanKuyk P.A."/>
            <person name="Visser H."/>
            <person name="van de Vondervoort P.J."/>
            <person name="de Vries R.P."/>
            <person name="Walton J."/>
            <person name="Xiang X."/>
            <person name="Xiong Y."/>
            <person name="Zeng A.P."/>
            <person name="Brandt B.W."/>
            <person name="Cornell M.J."/>
            <person name="van den Hondel C.A."/>
            <person name="Visser J."/>
            <person name="Oliver S.G."/>
            <person name="Turner G."/>
        </authorList>
    </citation>
    <scope>GENOME REANNOTATION</scope>
    <source>
        <strain>FGSC A4 / ATCC 38163 / CBS 112.46 / NRRL 194 / M139</strain>
    </source>
</reference>
<reference key="3">
    <citation type="journal article" date="2013" name="Proc. Natl. Acad. Sci. U.S.A.">
        <title>Accurate prediction of secondary metabolite gene clusters in filamentous fungi.</title>
        <authorList>
            <person name="Andersen M.R."/>
            <person name="Nielsen J.B."/>
            <person name="Klitgaard A."/>
            <person name="Petersen L.M."/>
            <person name="Zachariasen M."/>
            <person name="Hansen T.J."/>
            <person name="Blicher L.H."/>
            <person name="Gotfredsen C.H."/>
            <person name="Larsen T.O."/>
            <person name="Nielsen K.F."/>
            <person name="Mortensen U.H."/>
        </authorList>
    </citation>
    <scope>IDENTIFICATION OF THE CLUSTER</scope>
</reference>
<reference key="4">
    <citation type="journal article" date="2016" name="ACS Chem. Biol.">
        <title>New aspercryptins, lipopeptide natural products, revealed by HDAC inhibition in Aspergillus nidulans.</title>
        <authorList>
            <person name="Henke M.T."/>
            <person name="Soukup A.A."/>
            <person name="Goering A.W."/>
            <person name="McClure R.A."/>
            <person name="Thomson R.J."/>
            <person name="Keller N.P."/>
            <person name="Kelleher N.L."/>
        </authorList>
    </citation>
    <scope>FUNCTION</scope>
    <scope>INDUCTION</scope>
</reference>
<reference key="5">
    <citation type="journal article" date="2016" name="Angew. Chem. Int. Ed.">
        <title>Development of genetic dereplication strains in Aspergillus nidulans results in the discovery of aspercryptin.</title>
        <authorList>
            <person name="Chiang Y.M."/>
            <person name="Ahuja M."/>
            <person name="Oakley C.E."/>
            <person name="Entwistle R."/>
            <person name="Asokan A."/>
            <person name="Zutz C."/>
            <person name="Wang C.C."/>
            <person name="Oakley B.R."/>
        </authorList>
    </citation>
    <scope>FUNCTION</scope>
    <scope>DISRUPTION PHENOTYPE</scope>
    <scope>PATHWAY</scope>
</reference>
<organism>
    <name type="scientific">Emericella nidulans (strain FGSC A4 / ATCC 38163 / CBS 112.46 / NRRL 194 / M139)</name>
    <name type="common">Aspergillus nidulans</name>
    <dbReference type="NCBI Taxonomy" id="227321"/>
    <lineage>
        <taxon>Eukaryota</taxon>
        <taxon>Fungi</taxon>
        <taxon>Dikarya</taxon>
        <taxon>Ascomycota</taxon>
        <taxon>Pezizomycotina</taxon>
        <taxon>Eurotiomycetes</taxon>
        <taxon>Eurotiomycetidae</taxon>
        <taxon>Eurotiales</taxon>
        <taxon>Aspergillaceae</taxon>
        <taxon>Aspergillus</taxon>
        <taxon>Aspergillus subgen. Nidulantes</taxon>
    </lineage>
</organism>
<gene>
    <name evidence="5" type="primary">atnK</name>
    <name type="ORF">ANIA_07875</name>
</gene>
<name>ATNK_EMENI</name>
<evidence type="ECO:0000256" key="1">
    <source>
        <dbReference type="SAM" id="MobiDB-lite"/>
    </source>
</evidence>
<evidence type="ECO:0000269" key="2">
    <source>
    </source>
</evidence>
<evidence type="ECO:0000269" key="3">
    <source>
    </source>
</evidence>
<evidence type="ECO:0000269" key="4">
    <source>
    </source>
</evidence>
<evidence type="ECO:0000303" key="5">
    <source>
    </source>
</evidence>
<comment type="function">
    <text evidence="2 3 4">Part of the gene cluster that mediates the biosynthesis of aspercryptins, linear lipopeptides built from six amino acids including 2 highly unusual and nonproteogenic amino acids, 2-amino-octanoic acid (2aoa) and 2-amino-dodecanol (2adol) (PubMed:23248299, PubMed:26563584, PubMed:27310134). The core structure of aspercryptins is as follows: Ser/Ala-Thr-Ile/Val-2aoa-Asn-2adol (PubMed:27310134). The first step of aspercryptin biosynthesis is the generation of the fatty acid precursors, octanoic and dodecanoic acids, by the FAS subunits atnF and atnM (PubMed:26563584, PubMed:27310134). The fatty acid precursors are likely transformed into the corresponding alpha-amino fatty acids in three steps (PubMed:26563584, PubMed:27310134). First, they are hydroxylated by the cytochrome P450 monooxygenase atnE, then oxidized to the corresponding alpha-keto acids by the NAD(P)-dependent oxidoreductase atnD, and finally converted to the alpha-amino fatty acids by the PLP-dependent aminotransferases atnH or atnJ (PubMed:26563584, PubMed:27310134). the alpha-amino fatty acids, 2-amino-octanoic and 2-amino-dodecanoic acids, are recognized, activated, and covalently tethered to the NRPS atnA by its fourth and sixth adenylation domains (PubMed:27310134). The second module of atnA is the Thr module and contains an epimerase (E) domain responsible for the epimerization of Thr to D-allo-Thr (PubMed:26563584). Additionally, despite atnA having only one epimerase domain, the first amino acid of aspercryptin A1 is D-Ser, suggesting that serine is either loaded directly as D-Ser on the first module or that the epimerase domain in the threonine module epimerizes both L-Ser and L-Thr (PubMed:27310134). After condensation of the hexapeptide of aspercryptin, the C-terminal reductase (TE) domain might be involved in the reductive release and production of the aldehyde hexapeptide (PubMed:26563584). Further reduction would generate aspercryptins (PubMed:26563584, PubMed:27310134). The variety of aspercryptins produced reflects the flexibility of the atnA NRPS, allowing incorporation of alanine instead of serine, valine for isoleucine, and a C10 fatty amino alcohol instead of the C12 version (PubMed:27310134). AtnB seems to be involved in the selectivity for Ile versus Val by the third module (PubMed:26563584). Moreover, type B, C and D aspercryptins have an additional N-terminal cichorine, acetyl and propionyl group respectively (PubMed:27310134).</text>
</comment>
<comment type="pathway">
    <text evidence="3">Secondary metabolite biosynthesis.</text>
</comment>
<comment type="induction">
    <text evidence="4">Expression is positively regulated by the aspercryptin cluser-specific transcription factor atnN (PubMed:27310134).</text>
</comment>
<comment type="disruption phenotype">
    <text evidence="3">Decreases the production of aspercryptin by more than 80% but increases the titer of aspercryptin with Ile replaced by Val more than six-fold (PubMed:26563584).</text>
</comment>